<reference key="1">
    <citation type="submission" date="2001-09" db="EMBL/GenBank/DDBJ databases">
        <title>Characterisation of a senescence locus in Agaricus bisporus.</title>
        <authorList>
            <person name="Kingsnorth C.S."/>
            <person name="Woodhouse C.S."/>
            <person name="Henderson J."/>
            <person name="Burton K.S."/>
        </authorList>
    </citation>
    <scope>NUCLEOTIDE SEQUENCE [GENOMIC DNA]</scope>
</reference>
<name>G6PI_AGABI</name>
<accession>Q711G1</accession>
<gene>
    <name type="primary">gpi1</name>
</gene>
<evidence type="ECO:0000250" key="1">
    <source>
        <dbReference type="UniProtKB" id="P06744"/>
    </source>
</evidence>
<evidence type="ECO:0000250" key="2">
    <source>
        <dbReference type="UniProtKB" id="P06745"/>
    </source>
</evidence>
<evidence type="ECO:0000250" key="3">
    <source>
        <dbReference type="UniProtKB" id="P78917"/>
    </source>
</evidence>
<evidence type="ECO:0000305" key="4"/>
<keyword id="KW-0963">Cytoplasm</keyword>
<keyword id="KW-0312">Gluconeogenesis</keyword>
<keyword id="KW-0324">Glycolysis</keyword>
<keyword id="KW-0413">Isomerase</keyword>
<organism>
    <name type="scientific">Agaricus bisporus</name>
    <name type="common">White button mushroom</name>
    <dbReference type="NCBI Taxonomy" id="5341"/>
    <lineage>
        <taxon>Eukaryota</taxon>
        <taxon>Fungi</taxon>
        <taxon>Dikarya</taxon>
        <taxon>Basidiomycota</taxon>
        <taxon>Agaricomycotina</taxon>
        <taxon>Agaricomycetes</taxon>
        <taxon>Agaricomycetidae</taxon>
        <taxon>Agaricales</taxon>
        <taxon>Agaricineae</taxon>
        <taxon>Agaricaceae</taxon>
        <taxon>Agaricus</taxon>
    </lineage>
</organism>
<feature type="chain" id="PRO_0000180569" description="Glucose-6-phosphate isomerase">
    <location>
        <begin position="1"/>
        <end position="551"/>
    </location>
</feature>
<feature type="active site" description="Proton donor" evidence="1">
    <location>
        <position position="360"/>
    </location>
</feature>
<feature type="active site" evidence="1">
    <location>
        <position position="391"/>
    </location>
</feature>
<feature type="active site" evidence="1">
    <location>
        <position position="516"/>
    </location>
</feature>
<feature type="binding site" evidence="2">
    <location>
        <begin position="161"/>
        <end position="162"/>
    </location>
    <ligand>
        <name>D-glucose 6-phosphate</name>
        <dbReference type="ChEBI" id="CHEBI:61548"/>
    </ligand>
</feature>
<feature type="binding site" evidence="2">
    <location>
        <begin position="212"/>
        <end position="217"/>
    </location>
    <ligand>
        <name>D-glucose 6-phosphate</name>
        <dbReference type="ChEBI" id="CHEBI:61548"/>
    </ligand>
</feature>
<feature type="binding site" evidence="2">
    <location>
        <position position="356"/>
    </location>
    <ligand>
        <name>D-glucose 6-phosphate</name>
        <dbReference type="ChEBI" id="CHEBI:61548"/>
    </ligand>
</feature>
<feature type="binding site" evidence="2">
    <location>
        <position position="360"/>
    </location>
    <ligand>
        <name>D-glucose 6-phosphate</name>
        <dbReference type="ChEBI" id="CHEBI:61548"/>
    </ligand>
</feature>
<feature type="binding site" evidence="2">
    <location>
        <position position="391"/>
    </location>
    <ligand>
        <name>D-glucose 6-phosphate</name>
        <dbReference type="ChEBI" id="CHEBI:61548"/>
    </ligand>
</feature>
<feature type="binding site" evidence="2">
    <location>
        <position position="516"/>
    </location>
    <ligand>
        <name>D-glucose 6-phosphate</name>
        <dbReference type="ChEBI" id="CHEBI:61548"/>
    </ligand>
</feature>
<sequence>MTGSLASNYASWKQLQEIYDKDRAKIVLRDLFAADPQRFSKLSATYNSQSGPGVQILLDYSKHLVTEPILQKLFNLLREAKVEDARDKMFSGEHINTSEDRAVLHVALRNFNDFSIKEEGVDEVSKVLQHMKEFSESVRSGQWKGYTGKTINTIVNIGIGGSDLGPVMVTEALKPFSKRDLNAHFVSNIDGTHIAETLRLCDPERTLFIVASKTFTTQETITNAESARDWFLGFAKDKAHVAKHFVALSTNTSAVTAFGISEANMFQFWDWVGGRYSLWSAIGLSIALVIGFDNFEKLLRGAHAMDQHFKTTPLEKNLPAIMAALGIWCNDFYGAQTLALLPYDQYLHKFADYFQQGDMESNGKFITKNGDRVNYQTGPIIWGASGTNGQHSFYQLIHQGTKIIPADFMAPATSHNPIANSKHHRILLSNFFAQPEALAFGKTEEEVRKELGQNASEALVKSKVFEGNRPSSSLMFDKLDPATLGALIALYEHKIFVQGVVWGINSFDQMGVELGKVLAKQILAQLDKSDDVKGHDSSVRHLPFILQVDHC</sequence>
<dbReference type="EC" id="5.3.1.9" evidence="1"/>
<dbReference type="EMBL" id="AJ345056">
    <property type="protein sequence ID" value="CAC87889.1"/>
    <property type="molecule type" value="Genomic_DNA"/>
</dbReference>
<dbReference type="SMR" id="Q711G1"/>
<dbReference type="UniPathway" id="UPA00109">
    <property type="reaction ID" value="UER00181"/>
</dbReference>
<dbReference type="GO" id="GO:0005829">
    <property type="term" value="C:cytosol"/>
    <property type="evidence" value="ECO:0007669"/>
    <property type="project" value="UniProtKB-SubCell"/>
</dbReference>
<dbReference type="GO" id="GO:0097367">
    <property type="term" value="F:carbohydrate derivative binding"/>
    <property type="evidence" value="ECO:0007669"/>
    <property type="project" value="InterPro"/>
</dbReference>
<dbReference type="GO" id="GO:0004347">
    <property type="term" value="F:glucose-6-phosphate isomerase activity"/>
    <property type="evidence" value="ECO:0007669"/>
    <property type="project" value="UniProtKB-EC"/>
</dbReference>
<dbReference type="GO" id="GO:0048029">
    <property type="term" value="F:monosaccharide binding"/>
    <property type="evidence" value="ECO:0007669"/>
    <property type="project" value="TreeGrafter"/>
</dbReference>
<dbReference type="GO" id="GO:0006094">
    <property type="term" value="P:gluconeogenesis"/>
    <property type="evidence" value="ECO:0007669"/>
    <property type="project" value="UniProtKB-KW"/>
</dbReference>
<dbReference type="GO" id="GO:0051156">
    <property type="term" value="P:glucose 6-phosphate metabolic process"/>
    <property type="evidence" value="ECO:0007669"/>
    <property type="project" value="TreeGrafter"/>
</dbReference>
<dbReference type="GO" id="GO:0006096">
    <property type="term" value="P:glycolytic process"/>
    <property type="evidence" value="ECO:0007669"/>
    <property type="project" value="UniProtKB-UniPathway"/>
</dbReference>
<dbReference type="CDD" id="cd05015">
    <property type="entry name" value="SIS_PGI_1"/>
    <property type="match status" value="1"/>
</dbReference>
<dbReference type="CDD" id="cd05016">
    <property type="entry name" value="SIS_PGI_2"/>
    <property type="match status" value="1"/>
</dbReference>
<dbReference type="FunFam" id="3.40.50.10490:FF:000004">
    <property type="entry name" value="Glucose-6-phosphate isomerase"/>
    <property type="match status" value="1"/>
</dbReference>
<dbReference type="Gene3D" id="1.10.1390.10">
    <property type="match status" value="1"/>
</dbReference>
<dbReference type="Gene3D" id="3.40.50.10490">
    <property type="entry name" value="Glucose-6-phosphate isomerase like protein, domain 1"/>
    <property type="match status" value="2"/>
</dbReference>
<dbReference type="HAMAP" id="MF_00473">
    <property type="entry name" value="G6P_isomerase"/>
    <property type="match status" value="1"/>
</dbReference>
<dbReference type="InterPro" id="IPR001672">
    <property type="entry name" value="G6P_Isomerase"/>
</dbReference>
<dbReference type="InterPro" id="IPR023096">
    <property type="entry name" value="G6P_Isomerase_C"/>
</dbReference>
<dbReference type="InterPro" id="IPR018189">
    <property type="entry name" value="Phosphoglucose_isomerase_CS"/>
</dbReference>
<dbReference type="InterPro" id="IPR046348">
    <property type="entry name" value="SIS_dom_sf"/>
</dbReference>
<dbReference type="InterPro" id="IPR035476">
    <property type="entry name" value="SIS_PGI_1"/>
</dbReference>
<dbReference type="InterPro" id="IPR035482">
    <property type="entry name" value="SIS_PGI_2"/>
</dbReference>
<dbReference type="NCBIfam" id="NF001211">
    <property type="entry name" value="PRK00179.1"/>
    <property type="match status" value="1"/>
</dbReference>
<dbReference type="PANTHER" id="PTHR11469">
    <property type="entry name" value="GLUCOSE-6-PHOSPHATE ISOMERASE"/>
    <property type="match status" value="1"/>
</dbReference>
<dbReference type="PANTHER" id="PTHR11469:SF1">
    <property type="entry name" value="GLUCOSE-6-PHOSPHATE ISOMERASE"/>
    <property type="match status" value="1"/>
</dbReference>
<dbReference type="Pfam" id="PF00342">
    <property type="entry name" value="PGI"/>
    <property type="match status" value="1"/>
</dbReference>
<dbReference type="PRINTS" id="PR00662">
    <property type="entry name" value="G6PISOMERASE"/>
</dbReference>
<dbReference type="SUPFAM" id="SSF53697">
    <property type="entry name" value="SIS domain"/>
    <property type="match status" value="1"/>
</dbReference>
<dbReference type="PROSITE" id="PS00765">
    <property type="entry name" value="P_GLUCOSE_ISOMERASE_1"/>
    <property type="match status" value="1"/>
</dbReference>
<dbReference type="PROSITE" id="PS00174">
    <property type="entry name" value="P_GLUCOSE_ISOMERASE_2"/>
    <property type="match status" value="1"/>
</dbReference>
<dbReference type="PROSITE" id="PS51463">
    <property type="entry name" value="P_GLUCOSE_ISOMERASE_3"/>
    <property type="match status" value="1"/>
</dbReference>
<protein>
    <recommendedName>
        <fullName>Glucose-6-phosphate isomerase</fullName>
        <shortName>GPI</shortName>
        <ecNumber evidence="1">5.3.1.9</ecNumber>
    </recommendedName>
    <alternativeName>
        <fullName>Phosphoglucose isomerase</fullName>
        <shortName>PGI</shortName>
    </alternativeName>
    <alternativeName>
        <fullName>Phosphohexose isomerase</fullName>
        <shortName>PHI</shortName>
    </alternativeName>
</protein>
<proteinExistence type="inferred from homology"/>
<comment type="function">
    <text evidence="1">In the cytoplasm, catalyzes the conversion of glucose-6-phosphate to fructose-6-phosphate, the second step in glycolysis, and the reverse reaction during gluconeogenesis.</text>
</comment>
<comment type="catalytic activity">
    <reaction evidence="1">
        <text>alpha-D-glucose 6-phosphate = beta-D-fructose 6-phosphate</text>
        <dbReference type="Rhea" id="RHEA:11816"/>
        <dbReference type="ChEBI" id="CHEBI:57634"/>
        <dbReference type="ChEBI" id="CHEBI:58225"/>
        <dbReference type="EC" id="5.3.1.9"/>
    </reaction>
</comment>
<comment type="pathway">
    <text evidence="4">Carbohydrate degradation; glycolysis; D-glyceraldehyde 3-phosphate and glycerone phosphate from D-glucose: step 2/4.</text>
</comment>
<comment type="subunit">
    <text evidence="1">Homodimer.</text>
</comment>
<comment type="subcellular location">
    <subcellularLocation>
        <location evidence="3">Cytoplasm</location>
        <location evidence="3">Cytosol</location>
    </subcellularLocation>
</comment>
<comment type="similarity">
    <text evidence="4">Belongs to the GPI family.</text>
</comment>